<reference key="1">
    <citation type="journal article" date="1989" name="J. Exp. Med.">
        <title>Early onset of somatic mutation in immunoglobulin VH genes during the primary immune response.</title>
        <authorList>
            <person name="Levy N.S."/>
            <person name="Malipiero U.V."/>
            <person name="Lebecque S.G."/>
            <person name="Gearhart P.J."/>
        </authorList>
    </citation>
    <scope>NUCLEOTIDE SEQUENCE</scope>
    <source>
        <strain>BALB/cJ</strain>
    </source>
</reference>
<dbReference type="PIR" id="JT0504">
    <property type="entry name" value="HVMS91"/>
</dbReference>
<dbReference type="PDB" id="2DQT">
    <property type="method" value="X-ray"/>
    <property type="resolution" value="1.80 A"/>
    <property type="chains" value="H=1-97"/>
</dbReference>
<dbReference type="PDB" id="2DQU">
    <property type="method" value="X-ray"/>
    <property type="resolution" value="1.70 A"/>
    <property type="chains" value="H=1-97"/>
</dbReference>
<dbReference type="PDB" id="2DTM">
    <property type="method" value="X-ray"/>
    <property type="resolution" value="2.25 A"/>
    <property type="chains" value="H=1-97"/>
</dbReference>
<dbReference type="PDB" id="3AB0">
    <property type="method" value="X-ray"/>
    <property type="resolution" value="3.09 A"/>
    <property type="chains" value="B/E=1-97"/>
</dbReference>
<dbReference type="PDBsum" id="2DQT"/>
<dbReference type="PDBsum" id="2DQU"/>
<dbReference type="PDBsum" id="2DTM"/>
<dbReference type="PDBsum" id="3AB0"/>
<dbReference type="SMR" id="P18527"/>
<dbReference type="FunCoup" id="P18527">
    <property type="interactions" value="559"/>
</dbReference>
<dbReference type="InParanoid" id="P18527"/>
<dbReference type="EvolutionaryTrace" id="P18527"/>
<dbReference type="Proteomes" id="UP000000589">
    <property type="component" value="Unplaced"/>
</dbReference>
<dbReference type="RNAct" id="P18527">
    <property type="molecule type" value="protein"/>
</dbReference>
<dbReference type="GO" id="GO:0005576">
    <property type="term" value="C:extracellular region"/>
    <property type="evidence" value="ECO:0007669"/>
    <property type="project" value="UniProtKB-ARBA"/>
</dbReference>
<dbReference type="GO" id="GO:0019814">
    <property type="term" value="C:immunoglobulin complex"/>
    <property type="evidence" value="ECO:0007669"/>
    <property type="project" value="UniProtKB-KW"/>
</dbReference>
<dbReference type="GO" id="GO:0003823">
    <property type="term" value="F:antigen binding"/>
    <property type="evidence" value="ECO:0000318"/>
    <property type="project" value="GO_Central"/>
</dbReference>
<dbReference type="GO" id="GO:0016064">
    <property type="term" value="P:immunoglobulin mediated immune response"/>
    <property type="evidence" value="ECO:0000318"/>
    <property type="project" value="GO_Central"/>
</dbReference>
<dbReference type="FunFam" id="2.60.40.10:FF:001423">
    <property type="entry name" value="Ig heavy chain V region 5-84"/>
    <property type="match status" value="1"/>
</dbReference>
<dbReference type="Gene3D" id="2.60.40.10">
    <property type="entry name" value="Immunoglobulins"/>
    <property type="match status" value="1"/>
</dbReference>
<dbReference type="InterPro" id="IPR007110">
    <property type="entry name" value="Ig-like_dom"/>
</dbReference>
<dbReference type="InterPro" id="IPR036179">
    <property type="entry name" value="Ig-like_dom_sf"/>
</dbReference>
<dbReference type="InterPro" id="IPR013783">
    <property type="entry name" value="Ig-like_fold"/>
</dbReference>
<dbReference type="InterPro" id="IPR013106">
    <property type="entry name" value="Ig_V-set"/>
</dbReference>
<dbReference type="InterPro" id="IPR050199">
    <property type="entry name" value="IgHV"/>
</dbReference>
<dbReference type="PANTHER" id="PTHR23266">
    <property type="entry name" value="IMMUNOGLOBULIN HEAVY CHAIN"/>
    <property type="match status" value="1"/>
</dbReference>
<dbReference type="Pfam" id="PF07686">
    <property type="entry name" value="V-set"/>
    <property type="match status" value="1"/>
</dbReference>
<dbReference type="SMART" id="SM00406">
    <property type="entry name" value="IGv"/>
    <property type="match status" value="1"/>
</dbReference>
<dbReference type="SUPFAM" id="SSF48726">
    <property type="entry name" value="Immunoglobulin"/>
    <property type="match status" value="1"/>
</dbReference>
<dbReference type="PROSITE" id="PS50835">
    <property type="entry name" value="IG_LIKE"/>
    <property type="match status" value="1"/>
</dbReference>
<evidence type="ECO:0007829" key="1">
    <source>
        <dbReference type="PDB" id="2DQU"/>
    </source>
</evidence>
<sequence length="97" mass="10661">EVKLVESGGGLVKPGGSLKLSCAASGFTFSSYAMSWVRQTPEKRLEWVASISSGGSTYYPDSVKGRFTISRDNARNILYLQMSSLRSEDTAMYYCAR</sequence>
<organism>
    <name type="scientific">Mus musculus</name>
    <name type="common">Mouse</name>
    <dbReference type="NCBI Taxonomy" id="10090"/>
    <lineage>
        <taxon>Eukaryota</taxon>
        <taxon>Metazoa</taxon>
        <taxon>Chordata</taxon>
        <taxon>Craniata</taxon>
        <taxon>Vertebrata</taxon>
        <taxon>Euteleostomi</taxon>
        <taxon>Mammalia</taxon>
        <taxon>Eutheria</taxon>
        <taxon>Euarchontoglires</taxon>
        <taxon>Glires</taxon>
        <taxon>Rodentia</taxon>
        <taxon>Myomorpha</taxon>
        <taxon>Muroidea</taxon>
        <taxon>Muridae</taxon>
        <taxon>Murinae</taxon>
        <taxon>Mus</taxon>
        <taxon>Mus</taxon>
    </lineage>
</organism>
<protein>
    <recommendedName>
        <fullName>Ig heavy chain V region 914</fullName>
    </recommendedName>
</protein>
<name>HVM56_MOUSE</name>
<feature type="chain" id="PRO_0000059899" description="Ig heavy chain V region 914">
    <location>
        <begin position="1"/>
        <end position="97" status="greater than"/>
    </location>
</feature>
<feature type="domain" description="Ig-like">
    <location>
        <begin position="1"/>
        <end position="97" status="greater than"/>
    </location>
</feature>
<feature type="non-terminal residue">
    <location>
        <position position="97"/>
    </location>
</feature>
<feature type="strand" evidence="1">
    <location>
        <begin position="3"/>
        <end position="7"/>
    </location>
</feature>
<feature type="strand" evidence="1">
    <location>
        <begin position="10"/>
        <end position="12"/>
    </location>
</feature>
<feature type="strand" evidence="1">
    <location>
        <begin position="18"/>
        <end position="27"/>
    </location>
</feature>
<feature type="helix" evidence="1">
    <location>
        <begin position="29"/>
        <end position="31"/>
    </location>
</feature>
<feature type="strand" evidence="1">
    <location>
        <begin position="32"/>
        <end position="39"/>
    </location>
</feature>
<feature type="strand" evidence="1">
    <location>
        <begin position="45"/>
        <end position="51"/>
    </location>
</feature>
<feature type="strand" evidence="1">
    <location>
        <begin position="57"/>
        <end position="59"/>
    </location>
</feature>
<feature type="helix" evidence="1">
    <location>
        <begin position="61"/>
        <end position="63"/>
    </location>
</feature>
<feature type="turn" evidence="1">
    <location>
        <begin position="64"/>
        <end position="66"/>
    </location>
</feature>
<feature type="strand" evidence="1">
    <location>
        <begin position="67"/>
        <end position="72"/>
    </location>
</feature>
<feature type="turn" evidence="1">
    <location>
        <begin position="73"/>
        <end position="76"/>
    </location>
</feature>
<feature type="strand" evidence="1">
    <location>
        <begin position="77"/>
        <end position="82"/>
    </location>
</feature>
<feature type="helix" evidence="1">
    <location>
        <begin position="87"/>
        <end position="89"/>
    </location>
</feature>
<feature type="strand" evidence="1">
    <location>
        <begin position="91"/>
        <end position="97"/>
    </location>
</feature>
<accession>P18527</accession>
<proteinExistence type="evidence at protein level"/>
<comment type="miscellaneous">
    <text>This sequence belongs to the VH7183 subfamily.</text>
</comment>
<keyword id="KW-0002">3D-structure</keyword>
<keyword id="KW-1064">Adaptive immunity</keyword>
<keyword id="KW-0391">Immunity</keyword>
<keyword id="KW-1280">Immunoglobulin</keyword>
<keyword id="KW-1185">Reference proteome</keyword>